<gene>
    <name evidence="1" type="primary">rplI</name>
    <name type="ordered locus">Nwi_1694</name>
</gene>
<organism>
    <name type="scientific">Nitrobacter winogradskyi (strain ATCC 25391 / DSM 10237 / CIP 104748 / NCIMB 11846 / Nb-255)</name>
    <dbReference type="NCBI Taxonomy" id="323098"/>
    <lineage>
        <taxon>Bacteria</taxon>
        <taxon>Pseudomonadati</taxon>
        <taxon>Pseudomonadota</taxon>
        <taxon>Alphaproteobacteria</taxon>
        <taxon>Hyphomicrobiales</taxon>
        <taxon>Nitrobacteraceae</taxon>
        <taxon>Nitrobacter</taxon>
    </lineage>
</organism>
<sequence>MEIILLERVAKLGQMGEVVKVKDGFARNFLLRRGKALRATAENRAKYDGMKAELEANNIKAKGEAATVAEKINGRDIVVIRQASETGQLFGSVTVRDIVAALAADGIIVSRPQVWLDAPIKTIGQQKLTVAVHPEVEAEITVTVARSVDEAERIQRGEDISTRREDRDAAAEAIAAAGEFFDPDAQHDDEPAAEDDQNAEEK</sequence>
<feature type="chain" id="PRO_0000236550" description="Large ribosomal subunit protein bL9">
    <location>
        <begin position="1"/>
        <end position="202"/>
    </location>
</feature>
<feature type="region of interest" description="Disordered" evidence="2">
    <location>
        <begin position="176"/>
        <end position="202"/>
    </location>
</feature>
<feature type="compositionally biased region" description="Acidic residues" evidence="2">
    <location>
        <begin position="191"/>
        <end position="202"/>
    </location>
</feature>
<keyword id="KW-1185">Reference proteome</keyword>
<keyword id="KW-0687">Ribonucleoprotein</keyword>
<keyword id="KW-0689">Ribosomal protein</keyword>
<keyword id="KW-0694">RNA-binding</keyword>
<keyword id="KW-0699">rRNA-binding</keyword>
<proteinExistence type="inferred from homology"/>
<evidence type="ECO:0000255" key="1">
    <source>
        <dbReference type="HAMAP-Rule" id="MF_00503"/>
    </source>
</evidence>
<evidence type="ECO:0000256" key="2">
    <source>
        <dbReference type="SAM" id="MobiDB-lite"/>
    </source>
</evidence>
<evidence type="ECO:0000305" key="3"/>
<reference key="1">
    <citation type="journal article" date="2006" name="Appl. Environ. Microbiol.">
        <title>Genome sequence of the chemolithoautotrophic nitrite-oxidizing bacterium Nitrobacter winogradskyi Nb-255.</title>
        <authorList>
            <person name="Starkenburg S.R."/>
            <person name="Chain P.S.G."/>
            <person name="Sayavedra-Soto L.A."/>
            <person name="Hauser L."/>
            <person name="Land M.L."/>
            <person name="Larimer F.W."/>
            <person name="Malfatti S.A."/>
            <person name="Klotz M.G."/>
            <person name="Bottomley P.J."/>
            <person name="Arp D.J."/>
            <person name="Hickey W.J."/>
        </authorList>
    </citation>
    <scope>NUCLEOTIDE SEQUENCE [LARGE SCALE GENOMIC DNA]</scope>
    <source>
        <strain>ATCC 25391 / DSM 10237 / CIP 104748 / NCIMB 11846 / Nb-255</strain>
    </source>
</reference>
<dbReference type="EMBL" id="CP000115">
    <property type="protein sequence ID" value="ABA04955.1"/>
    <property type="molecule type" value="Genomic_DNA"/>
</dbReference>
<dbReference type="RefSeq" id="WP_011314953.1">
    <property type="nucleotide sequence ID" value="NC_007406.1"/>
</dbReference>
<dbReference type="SMR" id="Q3SRY6"/>
<dbReference type="STRING" id="323098.Nwi_1694"/>
<dbReference type="KEGG" id="nwi:Nwi_1694"/>
<dbReference type="eggNOG" id="COG0359">
    <property type="taxonomic scope" value="Bacteria"/>
</dbReference>
<dbReference type="HOGENOM" id="CLU_078938_1_0_5"/>
<dbReference type="OrthoDB" id="9788336at2"/>
<dbReference type="Proteomes" id="UP000002531">
    <property type="component" value="Chromosome"/>
</dbReference>
<dbReference type="GO" id="GO:1990904">
    <property type="term" value="C:ribonucleoprotein complex"/>
    <property type="evidence" value="ECO:0007669"/>
    <property type="project" value="UniProtKB-KW"/>
</dbReference>
<dbReference type="GO" id="GO:0005840">
    <property type="term" value="C:ribosome"/>
    <property type="evidence" value="ECO:0007669"/>
    <property type="project" value="UniProtKB-KW"/>
</dbReference>
<dbReference type="GO" id="GO:0019843">
    <property type="term" value="F:rRNA binding"/>
    <property type="evidence" value="ECO:0007669"/>
    <property type="project" value="UniProtKB-UniRule"/>
</dbReference>
<dbReference type="GO" id="GO:0003735">
    <property type="term" value="F:structural constituent of ribosome"/>
    <property type="evidence" value="ECO:0007669"/>
    <property type="project" value="InterPro"/>
</dbReference>
<dbReference type="GO" id="GO:0006412">
    <property type="term" value="P:translation"/>
    <property type="evidence" value="ECO:0007669"/>
    <property type="project" value="UniProtKB-UniRule"/>
</dbReference>
<dbReference type="Gene3D" id="3.10.430.100">
    <property type="entry name" value="Ribosomal protein L9, C-terminal domain"/>
    <property type="match status" value="1"/>
</dbReference>
<dbReference type="Gene3D" id="3.40.5.10">
    <property type="entry name" value="Ribosomal protein L9, N-terminal domain"/>
    <property type="match status" value="1"/>
</dbReference>
<dbReference type="HAMAP" id="MF_00503">
    <property type="entry name" value="Ribosomal_bL9"/>
    <property type="match status" value="1"/>
</dbReference>
<dbReference type="InterPro" id="IPR000244">
    <property type="entry name" value="Ribosomal_bL9"/>
</dbReference>
<dbReference type="InterPro" id="IPR009027">
    <property type="entry name" value="Ribosomal_bL9/RNase_H1_N"/>
</dbReference>
<dbReference type="InterPro" id="IPR020594">
    <property type="entry name" value="Ribosomal_bL9_bac/chp"/>
</dbReference>
<dbReference type="InterPro" id="IPR020069">
    <property type="entry name" value="Ribosomal_bL9_C"/>
</dbReference>
<dbReference type="InterPro" id="IPR036791">
    <property type="entry name" value="Ribosomal_bL9_C_sf"/>
</dbReference>
<dbReference type="InterPro" id="IPR020070">
    <property type="entry name" value="Ribosomal_bL9_N"/>
</dbReference>
<dbReference type="InterPro" id="IPR036935">
    <property type="entry name" value="Ribosomal_bL9_N_sf"/>
</dbReference>
<dbReference type="NCBIfam" id="TIGR00158">
    <property type="entry name" value="L9"/>
    <property type="match status" value="1"/>
</dbReference>
<dbReference type="PANTHER" id="PTHR21368">
    <property type="entry name" value="50S RIBOSOMAL PROTEIN L9"/>
    <property type="match status" value="1"/>
</dbReference>
<dbReference type="Pfam" id="PF03948">
    <property type="entry name" value="Ribosomal_L9_C"/>
    <property type="match status" value="1"/>
</dbReference>
<dbReference type="Pfam" id="PF01281">
    <property type="entry name" value="Ribosomal_L9_N"/>
    <property type="match status" value="1"/>
</dbReference>
<dbReference type="SUPFAM" id="SSF55658">
    <property type="entry name" value="L9 N-domain-like"/>
    <property type="match status" value="1"/>
</dbReference>
<dbReference type="SUPFAM" id="SSF55653">
    <property type="entry name" value="Ribosomal protein L9 C-domain"/>
    <property type="match status" value="1"/>
</dbReference>
<dbReference type="PROSITE" id="PS00651">
    <property type="entry name" value="RIBOSOMAL_L9"/>
    <property type="match status" value="1"/>
</dbReference>
<accession>Q3SRY6</accession>
<comment type="function">
    <text evidence="1">Binds to the 23S rRNA.</text>
</comment>
<comment type="similarity">
    <text evidence="1">Belongs to the bacterial ribosomal protein bL9 family.</text>
</comment>
<protein>
    <recommendedName>
        <fullName evidence="1">Large ribosomal subunit protein bL9</fullName>
    </recommendedName>
    <alternativeName>
        <fullName evidence="3">50S ribosomal protein L9</fullName>
    </alternativeName>
</protein>
<name>RL9_NITWN</name>